<keyword id="KW-0067">ATP-binding</keyword>
<keyword id="KW-0963">Cytoplasm</keyword>
<keyword id="KW-1015">Disulfide bond</keyword>
<keyword id="KW-0547">Nucleotide-binding</keyword>
<keyword id="KW-0694">RNA-binding</keyword>
<keyword id="KW-0808">Transferase</keyword>
<keyword id="KW-0819">tRNA processing</keyword>
<keyword id="KW-0820">tRNA-binding</keyword>
<feature type="chain" id="PRO_0000349594" description="tRNA-specific 2-thiouridylase MnmA 1">
    <location>
        <begin position="1"/>
        <end position="353"/>
    </location>
</feature>
<feature type="region of interest" description="Interaction with tRNA" evidence="1">
    <location>
        <begin position="144"/>
        <end position="146"/>
    </location>
</feature>
<feature type="region of interest" description="Interaction with tRNA" evidence="1">
    <location>
        <begin position="300"/>
        <end position="301"/>
    </location>
</feature>
<feature type="active site" description="Nucleophile" evidence="1">
    <location>
        <position position="98"/>
    </location>
</feature>
<feature type="active site" description="Cysteine persulfide intermediate" evidence="1">
    <location>
        <position position="194"/>
    </location>
</feature>
<feature type="binding site" evidence="1">
    <location>
        <begin position="9"/>
        <end position="16"/>
    </location>
    <ligand>
        <name>ATP</name>
        <dbReference type="ChEBI" id="CHEBI:30616"/>
    </ligand>
</feature>
<feature type="binding site" evidence="1">
    <location>
        <position position="35"/>
    </location>
    <ligand>
        <name>ATP</name>
        <dbReference type="ChEBI" id="CHEBI:30616"/>
    </ligand>
</feature>
<feature type="binding site" evidence="1">
    <location>
        <position position="122"/>
    </location>
    <ligand>
        <name>ATP</name>
        <dbReference type="ChEBI" id="CHEBI:30616"/>
    </ligand>
</feature>
<feature type="site" description="Interaction with tRNA" evidence="1">
    <location>
        <position position="123"/>
    </location>
</feature>
<feature type="site" description="Interaction with tRNA" evidence="1">
    <location>
        <position position="333"/>
    </location>
</feature>
<feature type="disulfide bond" description="Alternate" evidence="1">
    <location>
        <begin position="98"/>
        <end position="194"/>
    </location>
</feature>
<dbReference type="EC" id="2.8.1.13" evidence="1"/>
<dbReference type="EMBL" id="CP000939">
    <property type="protein sequence ID" value="ACA44820.1"/>
    <property type="molecule type" value="Genomic_DNA"/>
</dbReference>
<dbReference type="RefSeq" id="WP_003399465.1">
    <property type="nucleotide sequence ID" value="NC_010516.1"/>
</dbReference>
<dbReference type="SMR" id="B1ILH4"/>
<dbReference type="KEGG" id="cbb:CLD_1636"/>
<dbReference type="HOGENOM" id="CLU_035188_0_0_9"/>
<dbReference type="Proteomes" id="UP000008541">
    <property type="component" value="Chromosome"/>
</dbReference>
<dbReference type="GO" id="GO:0005737">
    <property type="term" value="C:cytoplasm"/>
    <property type="evidence" value="ECO:0007669"/>
    <property type="project" value="UniProtKB-SubCell"/>
</dbReference>
<dbReference type="GO" id="GO:0005524">
    <property type="term" value="F:ATP binding"/>
    <property type="evidence" value="ECO:0007669"/>
    <property type="project" value="UniProtKB-KW"/>
</dbReference>
<dbReference type="GO" id="GO:0000049">
    <property type="term" value="F:tRNA binding"/>
    <property type="evidence" value="ECO:0007669"/>
    <property type="project" value="UniProtKB-KW"/>
</dbReference>
<dbReference type="GO" id="GO:0103016">
    <property type="term" value="F:tRNA-uridine 2-sulfurtransferase activity"/>
    <property type="evidence" value="ECO:0007669"/>
    <property type="project" value="UniProtKB-EC"/>
</dbReference>
<dbReference type="GO" id="GO:0002143">
    <property type="term" value="P:tRNA wobble position uridine thiolation"/>
    <property type="evidence" value="ECO:0007669"/>
    <property type="project" value="TreeGrafter"/>
</dbReference>
<dbReference type="CDD" id="cd01998">
    <property type="entry name" value="MnmA_TRMU-like"/>
    <property type="match status" value="1"/>
</dbReference>
<dbReference type="FunFam" id="2.30.30.280:FF:000001">
    <property type="entry name" value="tRNA-specific 2-thiouridylase MnmA"/>
    <property type="match status" value="1"/>
</dbReference>
<dbReference type="FunFam" id="2.40.30.10:FF:000023">
    <property type="entry name" value="tRNA-specific 2-thiouridylase MnmA"/>
    <property type="match status" value="1"/>
</dbReference>
<dbReference type="FunFam" id="3.40.50.620:FF:000115">
    <property type="entry name" value="tRNA-specific 2-thiouridylase MnmA"/>
    <property type="match status" value="1"/>
</dbReference>
<dbReference type="Gene3D" id="2.30.30.280">
    <property type="entry name" value="Adenine nucleotide alpha hydrolases-like domains"/>
    <property type="match status" value="1"/>
</dbReference>
<dbReference type="Gene3D" id="3.40.50.620">
    <property type="entry name" value="HUPs"/>
    <property type="match status" value="1"/>
</dbReference>
<dbReference type="Gene3D" id="2.40.30.10">
    <property type="entry name" value="Translation factors"/>
    <property type="match status" value="1"/>
</dbReference>
<dbReference type="HAMAP" id="MF_00144">
    <property type="entry name" value="tRNA_thiouridyl_MnmA"/>
    <property type="match status" value="1"/>
</dbReference>
<dbReference type="InterPro" id="IPR004506">
    <property type="entry name" value="MnmA-like"/>
</dbReference>
<dbReference type="InterPro" id="IPR046885">
    <property type="entry name" value="MnmA-like_C"/>
</dbReference>
<dbReference type="InterPro" id="IPR046884">
    <property type="entry name" value="MnmA-like_central"/>
</dbReference>
<dbReference type="InterPro" id="IPR023382">
    <property type="entry name" value="MnmA-like_central_sf"/>
</dbReference>
<dbReference type="InterPro" id="IPR014729">
    <property type="entry name" value="Rossmann-like_a/b/a_fold"/>
</dbReference>
<dbReference type="NCBIfam" id="NF001138">
    <property type="entry name" value="PRK00143.1"/>
    <property type="match status" value="1"/>
</dbReference>
<dbReference type="NCBIfam" id="TIGR00420">
    <property type="entry name" value="trmU"/>
    <property type="match status" value="1"/>
</dbReference>
<dbReference type="PANTHER" id="PTHR11933:SF5">
    <property type="entry name" value="MITOCHONDRIAL TRNA-SPECIFIC 2-THIOURIDYLASE 1"/>
    <property type="match status" value="1"/>
</dbReference>
<dbReference type="PANTHER" id="PTHR11933">
    <property type="entry name" value="TRNA 5-METHYLAMINOMETHYL-2-THIOURIDYLATE -METHYLTRANSFERASE"/>
    <property type="match status" value="1"/>
</dbReference>
<dbReference type="Pfam" id="PF03054">
    <property type="entry name" value="tRNA_Me_trans"/>
    <property type="match status" value="1"/>
</dbReference>
<dbReference type="Pfam" id="PF20258">
    <property type="entry name" value="tRNA_Me_trans_C"/>
    <property type="match status" value="1"/>
</dbReference>
<dbReference type="Pfam" id="PF20259">
    <property type="entry name" value="tRNA_Me_trans_M"/>
    <property type="match status" value="1"/>
</dbReference>
<dbReference type="SUPFAM" id="SSF52402">
    <property type="entry name" value="Adenine nucleotide alpha hydrolases-like"/>
    <property type="match status" value="1"/>
</dbReference>
<name>MNMA1_CLOBK</name>
<organism>
    <name type="scientific">Clostridium botulinum (strain Okra / Type B1)</name>
    <dbReference type="NCBI Taxonomy" id="498213"/>
    <lineage>
        <taxon>Bacteria</taxon>
        <taxon>Bacillati</taxon>
        <taxon>Bacillota</taxon>
        <taxon>Clostridia</taxon>
        <taxon>Eubacteriales</taxon>
        <taxon>Clostridiaceae</taxon>
        <taxon>Clostridium</taxon>
    </lineage>
</organism>
<protein>
    <recommendedName>
        <fullName evidence="1">tRNA-specific 2-thiouridylase MnmA 1</fullName>
        <ecNumber evidence="1">2.8.1.13</ecNumber>
    </recommendedName>
</protein>
<reference key="1">
    <citation type="journal article" date="2007" name="PLoS ONE">
        <title>Analysis of the neurotoxin complex genes in Clostridium botulinum A1-A4 and B1 strains: BoNT/A3, /Ba4 and /B1 clusters are located within plasmids.</title>
        <authorList>
            <person name="Smith T.J."/>
            <person name="Hill K.K."/>
            <person name="Foley B.T."/>
            <person name="Detter J.C."/>
            <person name="Munk A.C."/>
            <person name="Bruce D.C."/>
            <person name="Doggett N.A."/>
            <person name="Smith L.A."/>
            <person name="Marks J.D."/>
            <person name="Xie G."/>
            <person name="Brettin T.S."/>
        </authorList>
    </citation>
    <scope>NUCLEOTIDE SEQUENCE [LARGE SCALE GENOMIC DNA]</scope>
    <source>
        <strain>Okra / Type B1</strain>
    </source>
</reference>
<comment type="function">
    <text evidence="1">Catalyzes the 2-thiolation of uridine at the wobble position (U34) of tRNA, leading to the formation of s(2)U34.</text>
</comment>
<comment type="catalytic activity">
    <reaction evidence="1">
        <text>S-sulfanyl-L-cysteinyl-[protein] + uridine(34) in tRNA + AH2 + ATP = 2-thiouridine(34) in tRNA + L-cysteinyl-[protein] + A + AMP + diphosphate + H(+)</text>
        <dbReference type="Rhea" id="RHEA:47032"/>
        <dbReference type="Rhea" id="RHEA-COMP:10131"/>
        <dbReference type="Rhea" id="RHEA-COMP:11726"/>
        <dbReference type="Rhea" id="RHEA-COMP:11727"/>
        <dbReference type="Rhea" id="RHEA-COMP:11728"/>
        <dbReference type="ChEBI" id="CHEBI:13193"/>
        <dbReference type="ChEBI" id="CHEBI:15378"/>
        <dbReference type="ChEBI" id="CHEBI:17499"/>
        <dbReference type="ChEBI" id="CHEBI:29950"/>
        <dbReference type="ChEBI" id="CHEBI:30616"/>
        <dbReference type="ChEBI" id="CHEBI:33019"/>
        <dbReference type="ChEBI" id="CHEBI:61963"/>
        <dbReference type="ChEBI" id="CHEBI:65315"/>
        <dbReference type="ChEBI" id="CHEBI:87170"/>
        <dbReference type="ChEBI" id="CHEBI:456215"/>
        <dbReference type="EC" id="2.8.1.13"/>
    </reaction>
</comment>
<comment type="subcellular location">
    <subcellularLocation>
        <location evidence="1">Cytoplasm</location>
    </subcellularLocation>
</comment>
<comment type="similarity">
    <text evidence="1">Belongs to the MnmA/TRMU family.</text>
</comment>
<accession>B1ILH4</accession>
<sequence length="353" mass="40289">MSKGTVALAMSGGVDSSVSAYILKERGYDVIGIYMDLWRDEREEYCNKSAAEDARRVAEKLDIPFHVINIEKKFKDNVIDYFIDEYLSGRTPNPCVACNRTIKFEAFFNAAKEFGADFMATGHYCKIEERNGRKVIVKAEDDKKDQTYMMYNLKQYQLERTIMPCGEYKKDYIREIAENIGLDVYNKKDSQEICFIPDNDHGGFIKRNYKSKVSEGNFVDKKGNIIGKHKGIIYYTIGQRKGLGIALGKPAYVIDINPITNEVVIGDEEDIFRTELIARDVNFIPFDKLEKSMELEAKVRYSAKPSKATIIPLENNKVKVVFQNKQRAITKGQSVVFYDKDMLVGGGIIEEIV</sequence>
<proteinExistence type="inferred from homology"/>
<evidence type="ECO:0000255" key="1">
    <source>
        <dbReference type="HAMAP-Rule" id="MF_00144"/>
    </source>
</evidence>
<gene>
    <name evidence="1" type="primary">mnmA1</name>
    <name type="ordered locus">CLD_1636</name>
</gene>